<sequence>MAVFTPVTLDDLSQWITQFDLGKALAIKGIPSGIENTNFFITTEFGEYVLTIFENLSFEQLPFYLNLMRHLAERGVLVPAPIATHQGNLINALHGKPAAIVSKLEGSSQMEPQAVHCAAVGAMLARMHIAAENFPIRQPNLRGLAWRNETAPIVMPYLSDSNKQLLAEEMAFQNAFAESDTYHQLQNGPIHADLFRNNVMFSGDHLTGFFDFYFAGCDTWLFDVAVTVNDWCIDVETGVLDQERVRAMLDAYHHVRPFTAAEQAAWQTMLRAGALRFWLSRLYDFHLPRDAEMLTPHDPGHFERILRLRIEQATPPLFTSAG</sequence>
<comment type="catalytic activity">
    <reaction evidence="1">
        <text>L-homoserine + ATP = O-phospho-L-homoserine + ADP + H(+)</text>
        <dbReference type="Rhea" id="RHEA:13985"/>
        <dbReference type="ChEBI" id="CHEBI:15378"/>
        <dbReference type="ChEBI" id="CHEBI:30616"/>
        <dbReference type="ChEBI" id="CHEBI:57476"/>
        <dbReference type="ChEBI" id="CHEBI:57590"/>
        <dbReference type="ChEBI" id="CHEBI:456216"/>
        <dbReference type="EC" id="2.7.1.39"/>
    </reaction>
</comment>
<comment type="pathway">
    <text evidence="1">Amino-acid biosynthesis; L-threonine biosynthesis; L-threonine from L-aspartate: step 4/5.</text>
</comment>
<comment type="similarity">
    <text evidence="1">Belongs to the pseudomonas-type ThrB family.</text>
</comment>
<proteinExistence type="inferred from homology"/>
<organism>
    <name type="scientific">Janthinobacterium sp. (strain Marseille)</name>
    <name type="common">Minibacterium massiliensis</name>
    <dbReference type="NCBI Taxonomy" id="375286"/>
    <lineage>
        <taxon>Bacteria</taxon>
        <taxon>Pseudomonadati</taxon>
        <taxon>Pseudomonadota</taxon>
        <taxon>Betaproteobacteria</taxon>
        <taxon>Burkholderiales</taxon>
        <taxon>Oxalobacteraceae</taxon>
        <taxon>Janthinobacterium</taxon>
    </lineage>
</organism>
<name>KHSE_JANMA</name>
<protein>
    <recommendedName>
        <fullName evidence="1">Homoserine kinase</fullName>
        <shortName evidence="1">HK</shortName>
        <shortName evidence="1">HSK</shortName>
        <ecNumber evidence="1">2.7.1.39</ecNumber>
    </recommendedName>
</protein>
<keyword id="KW-0028">Amino-acid biosynthesis</keyword>
<keyword id="KW-0067">ATP-binding</keyword>
<keyword id="KW-0418">Kinase</keyword>
<keyword id="KW-0547">Nucleotide-binding</keyword>
<keyword id="KW-0791">Threonine biosynthesis</keyword>
<keyword id="KW-0808">Transferase</keyword>
<dbReference type="EC" id="2.7.1.39" evidence="1"/>
<dbReference type="EMBL" id="CP000269">
    <property type="protein sequence ID" value="ABR88377.1"/>
    <property type="molecule type" value="Genomic_DNA"/>
</dbReference>
<dbReference type="RefSeq" id="WP_012078186.1">
    <property type="nucleotide sequence ID" value="NC_009659.1"/>
</dbReference>
<dbReference type="SMR" id="A6SUR4"/>
<dbReference type="STRING" id="375286.mma_0321"/>
<dbReference type="KEGG" id="mms:mma_0321"/>
<dbReference type="eggNOG" id="COG2334">
    <property type="taxonomic scope" value="Bacteria"/>
</dbReference>
<dbReference type="HOGENOM" id="CLU_053300_0_0_4"/>
<dbReference type="OrthoDB" id="9777460at2"/>
<dbReference type="UniPathway" id="UPA00050">
    <property type="reaction ID" value="UER00064"/>
</dbReference>
<dbReference type="Proteomes" id="UP000006388">
    <property type="component" value="Chromosome"/>
</dbReference>
<dbReference type="GO" id="GO:0005524">
    <property type="term" value="F:ATP binding"/>
    <property type="evidence" value="ECO:0007669"/>
    <property type="project" value="UniProtKB-KW"/>
</dbReference>
<dbReference type="GO" id="GO:0004413">
    <property type="term" value="F:homoserine kinase activity"/>
    <property type="evidence" value="ECO:0007669"/>
    <property type="project" value="UniProtKB-UniRule"/>
</dbReference>
<dbReference type="GO" id="GO:0009088">
    <property type="term" value="P:threonine biosynthetic process"/>
    <property type="evidence" value="ECO:0007669"/>
    <property type="project" value="UniProtKB-UniRule"/>
</dbReference>
<dbReference type="CDD" id="cd05153">
    <property type="entry name" value="HomoserineK_II"/>
    <property type="match status" value="1"/>
</dbReference>
<dbReference type="Gene3D" id="3.90.1200.10">
    <property type="match status" value="1"/>
</dbReference>
<dbReference type="Gene3D" id="3.30.200.20">
    <property type="entry name" value="Phosphorylase Kinase, domain 1"/>
    <property type="match status" value="1"/>
</dbReference>
<dbReference type="HAMAP" id="MF_00301">
    <property type="entry name" value="Homoser_kinase_2"/>
    <property type="match status" value="1"/>
</dbReference>
<dbReference type="InterPro" id="IPR002575">
    <property type="entry name" value="Aminoglycoside_PTrfase"/>
</dbReference>
<dbReference type="InterPro" id="IPR005280">
    <property type="entry name" value="Homoserine_kinase_II"/>
</dbReference>
<dbReference type="InterPro" id="IPR011009">
    <property type="entry name" value="Kinase-like_dom_sf"/>
</dbReference>
<dbReference type="InterPro" id="IPR050249">
    <property type="entry name" value="Pseudomonas-type_ThrB"/>
</dbReference>
<dbReference type="NCBIfam" id="NF003558">
    <property type="entry name" value="PRK05231.1"/>
    <property type="match status" value="1"/>
</dbReference>
<dbReference type="NCBIfam" id="TIGR00938">
    <property type="entry name" value="thrB_alt"/>
    <property type="match status" value="1"/>
</dbReference>
<dbReference type="PANTHER" id="PTHR21064:SF6">
    <property type="entry name" value="AMINOGLYCOSIDE PHOSPHOTRANSFERASE DOMAIN-CONTAINING PROTEIN"/>
    <property type="match status" value="1"/>
</dbReference>
<dbReference type="PANTHER" id="PTHR21064">
    <property type="entry name" value="AMINOGLYCOSIDE PHOSPHOTRANSFERASE DOMAIN-CONTAINING PROTEIN-RELATED"/>
    <property type="match status" value="1"/>
</dbReference>
<dbReference type="Pfam" id="PF01636">
    <property type="entry name" value="APH"/>
    <property type="match status" value="1"/>
</dbReference>
<dbReference type="SUPFAM" id="SSF56112">
    <property type="entry name" value="Protein kinase-like (PK-like)"/>
    <property type="match status" value="1"/>
</dbReference>
<gene>
    <name evidence="1" type="primary">thrB</name>
    <name type="ordered locus">mma_0321</name>
</gene>
<feature type="chain" id="PRO_1000022583" description="Homoserine kinase">
    <location>
        <begin position="1"/>
        <end position="322"/>
    </location>
</feature>
<accession>A6SUR4</accession>
<evidence type="ECO:0000255" key="1">
    <source>
        <dbReference type="HAMAP-Rule" id="MF_00301"/>
    </source>
</evidence>
<reference key="1">
    <citation type="journal article" date="2007" name="PLoS Genet.">
        <title>Genome analysis of Minibacterium massiliensis highlights the convergent evolution of water-living bacteria.</title>
        <authorList>
            <person name="Audic S."/>
            <person name="Robert C."/>
            <person name="Campagna B."/>
            <person name="Parinello H."/>
            <person name="Claverie J.-M."/>
            <person name="Raoult D."/>
            <person name="Drancourt M."/>
        </authorList>
    </citation>
    <scope>NUCLEOTIDE SEQUENCE [LARGE SCALE GENOMIC DNA]</scope>
    <source>
        <strain>Marseille</strain>
    </source>
</reference>